<keyword id="KW-0046">Antibiotic resistance</keyword>
<keyword id="KW-0488">Methylation</keyword>
<keyword id="KW-1185">Reference proteome</keyword>
<keyword id="KW-0687">Ribonucleoprotein</keyword>
<keyword id="KW-0689">Ribosomal protein</keyword>
<keyword id="KW-0694">RNA-binding</keyword>
<keyword id="KW-0699">rRNA-binding</keyword>
<keyword id="KW-0820">tRNA-binding</keyword>
<evidence type="ECO:0000250" key="1"/>
<evidence type="ECO:0000269" key="2">
    <source>
    </source>
</evidence>
<evidence type="ECO:0000305" key="3"/>
<reference key="1">
    <citation type="journal article" date="2001" name="FEMS Microbiol. Lett.">
        <title>First evidence for a restriction-modification system in Leptospira sp.</title>
        <authorList>
            <person name="Brenot A."/>
            <person name="Werts C."/>
            <person name="Ottone C."/>
            <person name="Sertour N."/>
            <person name="Charon N.W."/>
            <person name="Postic D."/>
            <person name="Baranton G."/>
            <person name="Saint Girons I."/>
        </authorList>
    </citation>
    <scope>NUCLEOTIDE SEQUENCE [GENOMIC DNA]</scope>
</reference>
<reference key="2">
    <citation type="journal article" date="2008" name="PLoS ONE">
        <title>Genome sequence of the saprophyte Leptospira biflexa provides insights into the evolution of Leptospira and the pathogenesis of leptospirosis.</title>
        <authorList>
            <person name="Picardeau M."/>
            <person name="Bulach D.M."/>
            <person name="Bouchier C."/>
            <person name="Zuerner R.L."/>
            <person name="Zidane N."/>
            <person name="Wilson P.J."/>
            <person name="Creno S."/>
            <person name="Kuczek E.S."/>
            <person name="Bommezzadri S."/>
            <person name="Davis J.C."/>
            <person name="McGrath A."/>
            <person name="Johnson M.J."/>
            <person name="Boursaux-Eude C."/>
            <person name="Seemann T."/>
            <person name="Rouy Z."/>
            <person name="Coppel R.L."/>
            <person name="Rood J.I."/>
            <person name="Lajus A."/>
            <person name="Davies J.K."/>
            <person name="Medigue C."/>
            <person name="Adler B."/>
        </authorList>
    </citation>
    <scope>NUCLEOTIDE SEQUENCE [LARGE SCALE GENOMIC DNA]</scope>
    <source>
        <strain>Patoc 1 / ATCC 23582 / Paris</strain>
    </source>
</reference>
<reference key="3">
    <citation type="journal article" date="2001" name="Mol. Microbiol.">
        <title>First evidence for gene replacement in Leptospira spp. Inactivation of L. biflexa flaB results in non-motile mutants deficient in endoflagella.</title>
        <authorList>
            <person name="Picardeau M."/>
            <person name="Brenot A."/>
            <person name="Saint Girons I."/>
        </authorList>
    </citation>
    <scope>VARIANT STREPTOMYCIN RESISTANT ARG-88</scope>
</reference>
<dbReference type="EMBL" id="AJ310919">
    <property type="protein sequence ID" value="CAC44030.1"/>
    <property type="molecule type" value="Genomic_DNA"/>
</dbReference>
<dbReference type="EMBL" id="CP000786">
    <property type="protein sequence ID" value="ABZ98072.1"/>
    <property type="molecule type" value="Genomic_DNA"/>
</dbReference>
<dbReference type="RefSeq" id="WP_004783543.1">
    <property type="nucleotide sequence ID" value="NC_010602.1"/>
</dbReference>
<dbReference type="SMR" id="B0SSI2"/>
<dbReference type="STRING" id="456481.LEPBI_I1969"/>
<dbReference type="GeneID" id="93343082"/>
<dbReference type="KEGG" id="lbi:LEPBI_I1969"/>
<dbReference type="HOGENOM" id="CLU_104295_1_2_12"/>
<dbReference type="OrthoDB" id="9802366at2"/>
<dbReference type="BioCyc" id="LBIF456481:LEPBI_RS09730-MONOMER"/>
<dbReference type="Proteomes" id="UP000001847">
    <property type="component" value="Chromosome I"/>
</dbReference>
<dbReference type="GO" id="GO:0015935">
    <property type="term" value="C:small ribosomal subunit"/>
    <property type="evidence" value="ECO:0007669"/>
    <property type="project" value="InterPro"/>
</dbReference>
<dbReference type="GO" id="GO:0019843">
    <property type="term" value="F:rRNA binding"/>
    <property type="evidence" value="ECO:0007669"/>
    <property type="project" value="UniProtKB-UniRule"/>
</dbReference>
<dbReference type="GO" id="GO:0003735">
    <property type="term" value="F:structural constituent of ribosome"/>
    <property type="evidence" value="ECO:0007669"/>
    <property type="project" value="InterPro"/>
</dbReference>
<dbReference type="GO" id="GO:0000049">
    <property type="term" value="F:tRNA binding"/>
    <property type="evidence" value="ECO:0007669"/>
    <property type="project" value="UniProtKB-UniRule"/>
</dbReference>
<dbReference type="GO" id="GO:0046677">
    <property type="term" value="P:response to antibiotic"/>
    <property type="evidence" value="ECO:0007669"/>
    <property type="project" value="UniProtKB-KW"/>
</dbReference>
<dbReference type="GO" id="GO:0006412">
    <property type="term" value="P:translation"/>
    <property type="evidence" value="ECO:0007669"/>
    <property type="project" value="UniProtKB-UniRule"/>
</dbReference>
<dbReference type="CDD" id="cd03368">
    <property type="entry name" value="Ribosomal_S12"/>
    <property type="match status" value="1"/>
</dbReference>
<dbReference type="FunFam" id="2.40.50.140:FF:000001">
    <property type="entry name" value="30S ribosomal protein S12"/>
    <property type="match status" value="1"/>
</dbReference>
<dbReference type="Gene3D" id="2.40.50.140">
    <property type="entry name" value="Nucleic acid-binding proteins"/>
    <property type="match status" value="1"/>
</dbReference>
<dbReference type="HAMAP" id="MF_00403_B">
    <property type="entry name" value="Ribosomal_uS12_B"/>
    <property type="match status" value="1"/>
</dbReference>
<dbReference type="InterPro" id="IPR012340">
    <property type="entry name" value="NA-bd_OB-fold"/>
</dbReference>
<dbReference type="InterPro" id="IPR006032">
    <property type="entry name" value="Ribosomal_uS12"/>
</dbReference>
<dbReference type="InterPro" id="IPR005679">
    <property type="entry name" value="Ribosomal_uS12_bac"/>
</dbReference>
<dbReference type="NCBIfam" id="TIGR00981">
    <property type="entry name" value="rpsL_bact"/>
    <property type="match status" value="1"/>
</dbReference>
<dbReference type="PANTHER" id="PTHR11652">
    <property type="entry name" value="30S RIBOSOMAL PROTEIN S12 FAMILY MEMBER"/>
    <property type="match status" value="1"/>
</dbReference>
<dbReference type="Pfam" id="PF00164">
    <property type="entry name" value="Ribosom_S12_S23"/>
    <property type="match status" value="1"/>
</dbReference>
<dbReference type="PIRSF" id="PIRSF002133">
    <property type="entry name" value="Ribosomal_S12/S23"/>
    <property type="match status" value="1"/>
</dbReference>
<dbReference type="PRINTS" id="PR01034">
    <property type="entry name" value="RIBOSOMALS12"/>
</dbReference>
<dbReference type="SUPFAM" id="SSF50249">
    <property type="entry name" value="Nucleic acid-binding proteins"/>
    <property type="match status" value="1"/>
</dbReference>
<dbReference type="PROSITE" id="PS00055">
    <property type="entry name" value="RIBOSOMAL_S12"/>
    <property type="match status" value="1"/>
</dbReference>
<organism>
    <name type="scientific">Leptospira biflexa serovar Patoc (strain Patoc 1 / ATCC 23582 / Paris)</name>
    <dbReference type="NCBI Taxonomy" id="456481"/>
    <lineage>
        <taxon>Bacteria</taxon>
        <taxon>Pseudomonadati</taxon>
        <taxon>Spirochaetota</taxon>
        <taxon>Spirochaetia</taxon>
        <taxon>Leptospirales</taxon>
        <taxon>Leptospiraceae</taxon>
        <taxon>Leptospira</taxon>
    </lineage>
</organism>
<feature type="chain" id="PRO_0000146245" description="Small ribosomal subunit protein uS12">
    <location>
        <begin position="1"/>
        <end position="124"/>
    </location>
</feature>
<feature type="modified residue" description="3-methylthioaspartic acid" evidence="1">
    <location>
        <position position="89"/>
    </location>
</feature>
<feature type="sequence variant" description="Streptomycin resistant." evidence="2">
    <original>K</original>
    <variation>R</variation>
    <location>
        <position position="88"/>
    </location>
</feature>
<accession>B0SSI2</accession>
<accession>P20820</accession>
<accession>P63197</accession>
<sequence>MPTINQLIRIGREDQKKRTKSPALKACPQRRGVCTRVMTFTPKKPNSALRKVARVRLTTGIEVTAYIPGEGHNLQEHNVVLIRGGRVKDLPGVRYHIIRGTLDTLGVDKRRKGRSKYGAKRPKA</sequence>
<name>RS12_LEPBP</name>
<protein>
    <recommendedName>
        <fullName evidence="3">Small ribosomal subunit protein uS12</fullName>
    </recommendedName>
    <alternativeName>
        <fullName>30S ribosomal protein S12</fullName>
    </alternativeName>
</protein>
<gene>
    <name type="primary">rpsL</name>
    <name type="ordered locus">LEPBI_I1969</name>
</gene>
<proteinExistence type="inferred from homology"/>
<comment type="function">
    <text evidence="1">With S4 and S5 plays an important role in translational accuracy.</text>
</comment>
<comment type="function">
    <text evidence="1">Interacts with and stabilizes bases of the 16S rRNA that are involved in tRNA selection in the A site and with the mRNA backbone. Located at the interface of the 30S and 50S subunits, it traverses the body of the 30S subunit contacting proteins on the other side and probably holding the rRNA structure together. The combined cluster of proteins S8, S12 and S17 appears to hold together the shoulder and platform of the 30S subunit (By similarity).</text>
</comment>
<comment type="subunit">
    <text evidence="1">Part of the 30S ribosomal subunit. Contacts proteins S8 and S17. May interact with IF1 in the 30S initiation complex (By similarity).</text>
</comment>
<comment type="miscellaneous">
    <text>The streptomycin sensitive allele is dominant to the resistant allele in L.biflexa.</text>
</comment>
<comment type="similarity">
    <text evidence="3">Belongs to the universal ribosomal protein uS12 family.</text>
</comment>